<organism>
    <name type="scientific">Fusarium solani subsp. cucurbitae</name>
    <name type="common">Neocosmosporum cucurbitae</name>
    <dbReference type="NCBI Taxonomy" id="2747967"/>
    <lineage>
        <taxon>Eukaryota</taxon>
        <taxon>Fungi</taxon>
        <taxon>Dikarya</taxon>
        <taxon>Ascomycota</taxon>
        <taxon>Pezizomycotina</taxon>
        <taxon>Sordariomycetes</taxon>
        <taxon>Hypocreomycetidae</taxon>
        <taxon>Hypocreales</taxon>
        <taxon>Nectriaceae</taxon>
        <taxon>Fusarium</taxon>
        <taxon>Fusarium solani species complex</taxon>
    </lineage>
</organism>
<name>CUTI_FUSSC</name>
<evidence type="ECO:0000250" key="1">
    <source>
        <dbReference type="UniProtKB" id="P00590"/>
    </source>
</evidence>
<evidence type="ECO:0000250" key="2">
    <source>
        <dbReference type="UniProtKB" id="P11373"/>
    </source>
</evidence>
<evidence type="ECO:0000255" key="3"/>
<evidence type="ECO:0000255" key="4">
    <source>
        <dbReference type="PROSITE-ProRule" id="PRU10108"/>
    </source>
</evidence>
<evidence type="ECO:0000255" key="5">
    <source>
        <dbReference type="PROSITE-ProRule" id="PRU10109"/>
    </source>
</evidence>
<evidence type="ECO:0000305" key="6"/>
<reference key="1">
    <citation type="journal article" date="1997" name="Mol. Plant Microbe Interact.">
        <title>Effect of disruption of a cutinase gene (cutA) on virulence and tissue specificity of Fusarium solani f. sp. cucurbitae race 2 toward Cucurbita maxima and C. moschata.</title>
        <authorList>
            <person name="Crowhurst R.N."/>
            <person name="Binnie S.J."/>
            <person name="Bowen J.K."/>
            <person name="Hawthorne B.T."/>
            <person name="Plummer K.M."/>
            <person name="Rees-George J."/>
            <person name="Rikkerink E.H."/>
            <person name="Templeton M.D."/>
        </authorList>
    </citation>
    <scope>NUCLEOTIDE SEQUENCE [GENOMIC DNA]</scope>
    <source>
        <strain>PGB 153</strain>
    </source>
</reference>
<dbReference type="EC" id="3.1.1.74" evidence="4 5"/>
<dbReference type="EMBL" id="U63335">
    <property type="protein sequence ID" value="AAB05922.1"/>
    <property type="molecule type" value="Genomic_DNA"/>
</dbReference>
<dbReference type="BMRB" id="Q99174"/>
<dbReference type="SMR" id="Q99174"/>
<dbReference type="ESTHER" id="fusso-cutas">
    <property type="family name" value="Cutinase"/>
</dbReference>
<dbReference type="PHI-base" id="PHI:2849"/>
<dbReference type="GO" id="GO:0005576">
    <property type="term" value="C:extracellular region"/>
    <property type="evidence" value="ECO:0007669"/>
    <property type="project" value="UniProtKB-SubCell"/>
</dbReference>
<dbReference type="GO" id="GO:0050525">
    <property type="term" value="F:cutinase activity"/>
    <property type="evidence" value="ECO:0000250"/>
    <property type="project" value="UniProtKB"/>
</dbReference>
<dbReference type="GO" id="GO:0016052">
    <property type="term" value="P:carbohydrate catabolic process"/>
    <property type="evidence" value="ECO:0007669"/>
    <property type="project" value="TreeGrafter"/>
</dbReference>
<dbReference type="FunFam" id="3.40.50.1820:FF:000235">
    <property type="entry name" value="Cutinase 1"/>
    <property type="match status" value="1"/>
</dbReference>
<dbReference type="Gene3D" id="3.40.50.1820">
    <property type="entry name" value="alpha/beta hydrolase"/>
    <property type="match status" value="1"/>
</dbReference>
<dbReference type="InterPro" id="IPR029058">
    <property type="entry name" value="AB_hydrolase_fold"/>
</dbReference>
<dbReference type="InterPro" id="IPR000675">
    <property type="entry name" value="Cutinase/axe"/>
</dbReference>
<dbReference type="InterPro" id="IPR043580">
    <property type="entry name" value="CUTINASE_1"/>
</dbReference>
<dbReference type="InterPro" id="IPR043579">
    <property type="entry name" value="CUTINASE_2"/>
</dbReference>
<dbReference type="InterPro" id="IPR011150">
    <property type="entry name" value="Cutinase_monf"/>
</dbReference>
<dbReference type="PANTHER" id="PTHR48250:SF3">
    <property type="entry name" value="CUTINASE 1-RELATED"/>
    <property type="match status" value="1"/>
</dbReference>
<dbReference type="PANTHER" id="PTHR48250">
    <property type="entry name" value="CUTINASE 2-RELATED"/>
    <property type="match status" value="1"/>
</dbReference>
<dbReference type="Pfam" id="PF01083">
    <property type="entry name" value="Cutinase"/>
    <property type="match status" value="1"/>
</dbReference>
<dbReference type="PRINTS" id="PR00129">
    <property type="entry name" value="CUTINASE"/>
</dbReference>
<dbReference type="SMART" id="SM01110">
    <property type="entry name" value="Cutinase"/>
    <property type="match status" value="1"/>
</dbReference>
<dbReference type="SUPFAM" id="SSF53474">
    <property type="entry name" value="alpha/beta-Hydrolases"/>
    <property type="match status" value="1"/>
</dbReference>
<dbReference type="PROSITE" id="PS00155">
    <property type="entry name" value="CUTINASE_1"/>
    <property type="match status" value="1"/>
</dbReference>
<dbReference type="PROSITE" id="PS00931">
    <property type="entry name" value="CUTINASE_2"/>
    <property type="match status" value="1"/>
</dbReference>
<accession>Q99174</accession>
<comment type="function">
    <text evidence="1">Catalyzes the hydrolysis of complex carboxylic polyesters found in the cell wall of plants (By similarity). Degrades cutin, a macromolecule that forms the structure of the plant cuticle (By similarity). Allows pathogenic fungi to penetrate through the cuticular barrier into the host plant during the initial stage of fungal infection (By similarity).</text>
</comment>
<comment type="catalytic activity">
    <reaction evidence="4 5">
        <text>cutin + H2O = cutin monomers.</text>
        <dbReference type="EC" id="3.1.1.74"/>
    </reaction>
</comment>
<comment type="subcellular location">
    <subcellularLocation>
        <location evidence="2">Secreted</location>
    </subcellularLocation>
</comment>
<comment type="PTM">
    <text evidence="2">The 2 disulfide bonds play a critical role in holding the catalytic residues in juxta-position; reduction of the disulfide bridges results in the complete inactivation of the enzyme.</text>
</comment>
<comment type="similarity">
    <text evidence="6">Belongs to the cutinase family.</text>
</comment>
<sequence length="230" mass="23902">MKFFALTTFLAATASALPTSNPAQELEARQLGRTTRDDLINGNSASCADVIFIYARGSTETGNLGTLGPSIASNLESAFGTDGVWIQGVGGAYRATLGDNALPRGTSSAAIREMLGLFQQANTKCPDATLIAGGYSQGAALAAASIEDLDSAIRDKIAGTVLFGYTKNLQNRGRIPNYPADRTKVFCNVGDLVCTGSLIVAAPHLAYGPDARGPAPEFLIEKVRAVRGSA</sequence>
<proteinExistence type="inferred from homology"/>
<keyword id="KW-1015">Disulfide bond</keyword>
<keyword id="KW-0378">Hydrolase</keyword>
<keyword id="KW-0964">Secreted</keyword>
<keyword id="KW-0719">Serine esterase</keyword>
<keyword id="KW-0732">Signal</keyword>
<keyword id="KW-0843">Virulence</keyword>
<gene>
    <name type="primary">CUTA</name>
</gene>
<feature type="signal peptide" evidence="3">
    <location>
        <begin position="1"/>
        <end position="16"/>
    </location>
</feature>
<feature type="chain" id="PRO_0000006439" description="Cutinase">
    <location>
        <begin position="17"/>
        <end position="230"/>
    </location>
</feature>
<feature type="active site" description="Nucleophile" evidence="1">
    <location>
        <position position="136"/>
    </location>
</feature>
<feature type="active site" evidence="1">
    <location>
        <position position="191"/>
    </location>
</feature>
<feature type="active site" description="Proton donor/acceptor" evidence="1">
    <location>
        <position position="204"/>
    </location>
</feature>
<feature type="site" description="Transition state stabilizer" evidence="1">
    <location>
        <position position="58"/>
    </location>
</feature>
<feature type="site" description="Transition state stabilizer" evidence="1">
    <location>
        <position position="137"/>
    </location>
</feature>
<feature type="disulfide bond" evidence="1">
    <location>
        <begin position="47"/>
        <end position="125"/>
    </location>
</feature>
<feature type="disulfide bond" evidence="1">
    <location>
        <begin position="187"/>
        <end position="194"/>
    </location>
</feature>
<protein>
    <recommendedName>
        <fullName>Cutinase</fullName>
        <ecNumber evidence="4 5">3.1.1.74</ecNumber>
    </recommendedName>
    <alternativeName>
        <fullName>Cutin hydrolase</fullName>
    </alternativeName>
</protein>